<gene>
    <name evidence="1" type="primary">minC</name>
    <name type="ordered locus">NMC0160</name>
</gene>
<protein>
    <recommendedName>
        <fullName evidence="1">Probable septum site-determining protein MinC</fullName>
    </recommendedName>
</protein>
<keyword id="KW-0131">Cell cycle</keyword>
<keyword id="KW-0132">Cell division</keyword>
<keyword id="KW-0717">Septation</keyword>
<feature type="chain" id="PRO_1000047837" description="Probable septum site-determining protein MinC">
    <location>
        <begin position="1"/>
        <end position="237"/>
    </location>
</feature>
<proteinExistence type="inferred from homology"/>
<accession>A1KRK1</accession>
<evidence type="ECO:0000255" key="1">
    <source>
        <dbReference type="HAMAP-Rule" id="MF_00267"/>
    </source>
</evidence>
<name>MINC_NEIMF</name>
<organism>
    <name type="scientific">Neisseria meningitidis serogroup C / serotype 2a (strain ATCC 700532 / DSM 15464 / FAM18)</name>
    <dbReference type="NCBI Taxonomy" id="272831"/>
    <lineage>
        <taxon>Bacteria</taxon>
        <taxon>Pseudomonadati</taxon>
        <taxon>Pseudomonadota</taxon>
        <taxon>Betaproteobacteria</taxon>
        <taxon>Neisseriales</taxon>
        <taxon>Neisseriaceae</taxon>
        <taxon>Neisseria</taxon>
    </lineage>
</organism>
<comment type="function">
    <text evidence="1">Cell division inhibitor that blocks the formation of polar Z ring septums. Rapidly oscillates between the poles of the cell to destabilize FtsZ filaments that have formed before they mature into polar Z rings. Prevents FtsZ polymerization.</text>
</comment>
<comment type="subunit">
    <text evidence="1">Interacts with MinD and FtsZ.</text>
</comment>
<comment type="similarity">
    <text evidence="1">Belongs to the MinC family.</text>
</comment>
<sequence length="237" mass="26207">MMVYIMNAFDIKSTKMDVLSISLHTSDLFDLEDVLVKLGKKFQESGVVPFVLDVQEFDYPESLDLAALVSLFSRHGMQILGLKHSNERWAAAAMKYHLLFCLSHSENVKELGQVEVQNTEDGQKARKTVLITSPVRTGQQVYAEDGDLIVTGAVSQGAELIADGNIHIYAPMRGRALAGAKGDTSARIFIHSMQAELVSVAGIYRNFEQDLPNHLHKQPVQILLQDNRLVISAIGSE</sequence>
<dbReference type="EMBL" id="AM421808">
    <property type="protein sequence ID" value="CAM09479.1"/>
    <property type="molecule type" value="Genomic_DNA"/>
</dbReference>
<dbReference type="RefSeq" id="WP_002220172.1">
    <property type="nucleotide sequence ID" value="NC_008767.1"/>
</dbReference>
<dbReference type="SMR" id="A1KRK1"/>
<dbReference type="GeneID" id="93387245"/>
<dbReference type="KEGG" id="nmc:NMC0160"/>
<dbReference type="HOGENOM" id="CLU_067812_0_0_4"/>
<dbReference type="Proteomes" id="UP000002286">
    <property type="component" value="Chromosome"/>
</dbReference>
<dbReference type="GO" id="GO:0000902">
    <property type="term" value="P:cell morphogenesis"/>
    <property type="evidence" value="ECO:0007669"/>
    <property type="project" value="InterPro"/>
</dbReference>
<dbReference type="GO" id="GO:0000917">
    <property type="term" value="P:division septum assembly"/>
    <property type="evidence" value="ECO:0007669"/>
    <property type="project" value="UniProtKB-KW"/>
</dbReference>
<dbReference type="GO" id="GO:0051302">
    <property type="term" value="P:regulation of cell division"/>
    <property type="evidence" value="ECO:0007669"/>
    <property type="project" value="InterPro"/>
</dbReference>
<dbReference type="GO" id="GO:1901891">
    <property type="term" value="P:regulation of cell septum assembly"/>
    <property type="evidence" value="ECO:0007669"/>
    <property type="project" value="InterPro"/>
</dbReference>
<dbReference type="Gene3D" id="2.160.20.70">
    <property type="match status" value="1"/>
</dbReference>
<dbReference type="Gene3D" id="3.30.70.260">
    <property type="match status" value="1"/>
</dbReference>
<dbReference type="HAMAP" id="MF_00267">
    <property type="entry name" value="MinC"/>
    <property type="match status" value="1"/>
</dbReference>
<dbReference type="InterPro" id="IPR016098">
    <property type="entry name" value="CAP/MinC_C"/>
</dbReference>
<dbReference type="InterPro" id="IPR013033">
    <property type="entry name" value="MinC"/>
</dbReference>
<dbReference type="InterPro" id="IPR036145">
    <property type="entry name" value="MinC_C_sf"/>
</dbReference>
<dbReference type="InterPro" id="IPR007874">
    <property type="entry name" value="MinC_N"/>
</dbReference>
<dbReference type="InterPro" id="IPR005526">
    <property type="entry name" value="Septum_form_inhib_MinC_C"/>
</dbReference>
<dbReference type="NCBIfam" id="TIGR01222">
    <property type="entry name" value="minC"/>
    <property type="match status" value="1"/>
</dbReference>
<dbReference type="PANTHER" id="PTHR34108">
    <property type="entry name" value="SEPTUM SITE-DETERMINING PROTEIN MINC"/>
    <property type="match status" value="1"/>
</dbReference>
<dbReference type="PANTHER" id="PTHR34108:SF1">
    <property type="entry name" value="SEPTUM SITE-DETERMINING PROTEIN MINC"/>
    <property type="match status" value="1"/>
</dbReference>
<dbReference type="Pfam" id="PF03775">
    <property type="entry name" value="MinC_C"/>
    <property type="match status" value="1"/>
</dbReference>
<dbReference type="Pfam" id="PF05209">
    <property type="entry name" value="MinC_N"/>
    <property type="match status" value="1"/>
</dbReference>
<dbReference type="SUPFAM" id="SSF63848">
    <property type="entry name" value="Cell-division inhibitor MinC, C-terminal domain"/>
    <property type="match status" value="1"/>
</dbReference>
<reference key="1">
    <citation type="journal article" date="2007" name="PLoS Genet.">
        <title>Meningococcal genetic variation mechanisms viewed through comparative analysis of serogroup C strain FAM18.</title>
        <authorList>
            <person name="Bentley S.D."/>
            <person name="Vernikos G.S."/>
            <person name="Snyder L.A.S."/>
            <person name="Churcher C."/>
            <person name="Arrowsmith C."/>
            <person name="Chillingworth T."/>
            <person name="Cronin A."/>
            <person name="Davis P.H."/>
            <person name="Holroyd N.E."/>
            <person name="Jagels K."/>
            <person name="Maddison M."/>
            <person name="Moule S."/>
            <person name="Rabbinowitsch E."/>
            <person name="Sharp S."/>
            <person name="Unwin L."/>
            <person name="Whitehead S."/>
            <person name="Quail M.A."/>
            <person name="Achtman M."/>
            <person name="Barrell B.G."/>
            <person name="Saunders N.J."/>
            <person name="Parkhill J."/>
        </authorList>
    </citation>
    <scope>NUCLEOTIDE SEQUENCE [LARGE SCALE GENOMIC DNA]</scope>
    <source>
        <strain>ATCC 700532 / DSM 15464 / FAM18</strain>
    </source>
</reference>